<protein>
    <recommendedName>
        <fullName evidence="1">Putative cysteine ligase BshC</fullName>
        <ecNumber evidence="1">6.-.-.-</ecNumber>
    </recommendedName>
</protein>
<keyword id="KW-0175">Coiled coil</keyword>
<keyword id="KW-0436">Ligase</keyword>
<keyword id="KW-1185">Reference proteome</keyword>
<feature type="chain" id="PRO_0000378207" description="Putative cysteine ligase BshC">
    <location>
        <begin position="1"/>
        <end position="538"/>
    </location>
</feature>
<feature type="coiled-coil region" evidence="1">
    <location>
        <begin position="460"/>
        <end position="484"/>
    </location>
</feature>
<name>BSHC_BACAN</name>
<evidence type="ECO:0000255" key="1">
    <source>
        <dbReference type="HAMAP-Rule" id="MF_01867"/>
    </source>
</evidence>
<gene>
    <name evidence="1" type="primary">bshC</name>
    <name type="ordered locus">BA_4058</name>
    <name type="ordered locus">GBAA_4058</name>
    <name type="ordered locus">BAS3770</name>
</gene>
<accession>Q81WC2</accession>
<accession>Q6HUG7</accession>
<accession>Q6KNQ3</accession>
<sequence>MEIKEISVPQQGVVADYMNGKKEIQSCFDYMLTEDAFKQRVQDLREREFFRQDLVTHLLEYNTKLQAGEATIQNVKALGDENTYVVIAGQQAGLLTGPLYTIHKIISVLQLAKEKEESLGVKVVPVFWIAGEDHDMDEINHTFVTKNKKIKKTIFHDRNPKKASASESELSLEDCRKWIEEIFKTYPETNFTKDVLQFIDDSLRKSNTYVDFFGHLIMKMFVNSGLILVDSHHPELRKLEVPFFKQIVSKYKEVQEGLHNQQRVIKELGYKPIIETKSNAVHIFMEIDNERVLLEDNQGKFVGKDGTYSFSYKELIEEMERSPERFSNNVVTRPLMQEYVFPTLAFIGGPGELAYWSELQQVFHTIGFRMPPVVPRITITYIERDIATDLHDLQLQESDPFFNNVDKLRENWLSNQIEEPIDERFVEAKKEIIDIHKSLQQFVKKIDPGLSAFAGKNEFKINEQIELLERMLKRNVEKKHEVELNKFRRIQFALRPLGAPQERVWNVCYYLNQFGLDFVDRVMEKPFSWNGKHHVIKL</sequence>
<proteinExistence type="inferred from homology"/>
<organism>
    <name type="scientific">Bacillus anthracis</name>
    <dbReference type="NCBI Taxonomy" id="1392"/>
    <lineage>
        <taxon>Bacteria</taxon>
        <taxon>Bacillati</taxon>
        <taxon>Bacillota</taxon>
        <taxon>Bacilli</taxon>
        <taxon>Bacillales</taxon>
        <taxon>Bacillaceae</taxon>
        <taxon>Bacillus</taxon>
        <taxon>Bacillus cereus group</taxon>
    </lineage>
</organism>
<comment type="function">
    <text evidence="1">Involved in bacillithiol (BSH) biosynthesis. May catalyze the last step of the pathway, the addition of cysteine to glucosamine malate (GlcN-Mal) to generate BSH.</text>
</comment>
<comment type="similarity">
    <text evidence="1">Belongs to the BshC family.</text>
</comment>
<reference key="1">
    <citation type="journal article" date="2003" name="Nature">
        <title>The genome sequence of Bacillus anthracis Ames and comparison to closely related bacteria.</title>
        <authorList>
            <person name="Read T.D."/>
            <person name="Peterson S.N."/>
            <person name="Tourasse N.J."/>
            <person name="Baillie L.W."/>
            <person name="Paulsen I.T."/>
            <person name="Nelson K.E."/>
            <person name="Tettelin H."/>
            <person name="Fouts D.E."/>
            <person name="Eisen J.A."/>
            <person name="Gill S.R."/>
            <person name="Holtzapple E.K."/>
            <person name="Okstad O.A."/>
            <person name="Helgason E."/>
            <person name="Rilstone J."/>
            <person name="Wu M."/>
            <person name="Kolonay J.F."/>
            <person name="Beanan M.J."/>
            <person name="Dodson R.J."/>
            <person name="Brinkac L.M."/>
            <person name="Gwinn M.L."/>
            <person name="DeBoy R.T."/>
            <person name="Madpu R."/>
            <person name="Daugherty S.C."/>
            <person name="Durkin A.S."/>
            <person name="Haft D.H."/>
            <person name="Nelson W.C."/>
            <person name="Peterson J.D."/>
            <person name="Pop M."/>
            <person name="Khouri H.M."/>
            <person name="Radune D."/>
            <person name="Benton J.L."/>
            <person name="Mahamoud Y."/>
            <person name="Jiang L."/>
            <person name="Hance I.R."/>
            <person name="Weidman J.F."/>
            <person name="Berry K.J."/>
            <person name="Plaut R.D."/>
            <person name="Wolf A.M."/>
            <person name="Watkins K.L."/>
            <person name="Nierman W.C."/>
            <person name="Hazen A."/>
            <person name="Cline R.T."/>
            <person name="Redmond C."/>
            <person name="Thwaite J.E."/>
            <person name="White O."/>
            <person name="Salzberg S.L."/>
            <person name="Thomason B."/>
            <person name="Friedlander A.M."/>
            <person name="Koehler T.M."/>
            <person name="Hanna P.C."/>
            <person name="Kolstoe A.-B."/>
            <person name="Fraser C.M."/>
        </authorList>
    </citation>
    <scope>NUCLEOTIDE SEQUENCE [LARGE SCALE GENOMIC DNA]</scope>
    <source>
        <strain>Ames / isolate Porton</strain>
    </source>
</reference>
<reference key="2">
    <citation type="submission" date="2004-01" db="EMBL/GenBank/DDBJ databases">
        <title>Complete genome sequence of Bacillus anthracis Sterne.</title>
        <authorList>
            <person name="Brettin T.S."/>
            <person name="Bruce D."/>
            <person name="Challacombe J.F."/>
            <person name="Gilna P."/>
            <person name="Han C."/>
            <person name="Hill K."/>
            <person name="Hitchcock P."/>
            <person name="Jackson P."/>
            <person name="Keim P."/>
            <person name="Longmire J."/>
            <person name="Lucas S."/>
            <person name="Okinaka R."/>
            <person name="Richardson P."/>
            <person name="Rubin E."/>
            <person name="Tice H."/>
        </authorList>
    </citation>
    <scope>NUCLEOTIDE SEQUENCE [LARGE SCALE GENOMIC DNA]</scope>
    <source>
        <strain>Sterne</strain>
    </source>
</reference>
<reference key="3">
    <citation type="journal article" date="2009" name="J. Bacteriol.">
        <title>The complete genome sequence of Bacillus anthracis Ames 'Ancestor'.</title>
        <authorList>
            <person name="Ravel J."/>
            <person name="Jiang L."/>
            <person name="Stanley S.T."/>
            <person name="Wilson M.R."/>
            <person name="Decker R.S."/>
            <person name="Read T.D."/>
            <person name="Worsham P."/>
            <person name="Keim P.S."/>
            <person name="Salzberg S.L."/>
            <person name="Fraser-Liggett C.M."/>
            <person name="Rasko D.A."/>
        </authorList>
    </citation>
    <scope>NUCLEOTIDE SEQUENCE [LARGE SCALE GENOMIC DNA]</scope>
    <source>
        <strain>Ames ancestor</strain>
    </source>
</reference>
<dbReference type="EC" id="6.-.-.-" evidence="1"/>
<dbReference type="EMBL" id="AE016879">
    <property type="protein sequence ID" value="AAP27784.1"/>
    <property type="molecule type" value="Genomic_DNA"/>
</dbReference>
<dbReference type="EMBL" id="AE017334">
    <property type="protein sequence ID" value="AAT33176.1"/>
    <property type="molecule type" value="Genomic_DNA"/>
</dbReference>
<dbReference type="EMBL" id="AE017225">
    <property type="protein sequence ID" value="AAT56072.1"/>
    <property type="molecule type" value="Genomic_DNA"/>
</dbReference>
<dbReference type="RefSeq" id="NP_846298.1">
    <property type="nucleotide sequence ID" value="NC_003997.3"/>
</dbReference>
<dbReference type="RefSeq" id="WP_000403057.1">
    <property type="nucleotide sequence ID" value="NZ_WXXJ01000026.1"/>
</dbReference>
<dbReference type="RefSeq" id="YP_030021.1">
    <property type="nucleotide sequence ID" value="NC_005945.1"/>
</dbReference>
<dbReference type="SMR" id="Q81WC2"/>
<dbReference type="STRING" id="261594.GBAA_4058"/>
<dbReference type="DNASU" id="1085776"/>
<dbReference type="GeneID" id="45023748"/>
<dbReference type="KEGG" id="ban:BA_4058"/>
<dbReference type="KEGG" id="bar:GBAA_4058"/>
<dbReference type="KEGG" id="bat:BAS3770"/>
<dbReference type="PATRIC" id="fig|198094.11.peg.4029"/>
<dbReference type="eggNOG" id="COG4365">
    <property type="taxonomic scope" value="Bacteria"/>
</dbReference>
<dbReference type="HOGENOM" id="CLU_022249_1_0_9"/>
<dbReference type="OMA" id="YWMATED"/>
<dbReference type="OrthoDB" id="9765151at2"/>
<dbReference type="Proteomes" id="UP000000427">
    <property type="component" value="Chromosome"/>
</dbReference>
<dbReference type="Proteomes" id="UP000000594">
    <property type="component" value="Chromosome"/>
</dbReference>
<dbReference type="GO" id="GO:0016874">
    <property type="term" value="F:ligase activity"/>
    <property type="evidence" value="ECO:0007669"/>
    <property type="project" value="UniProtKB-UniRule"/>
</dbReference>
<dbReference type="HAMAP" id="MF_01867">
    <property type="entry name" value="BshC"/>
    <property type="match status" value="1"/>
</dbReference>
<dbReference type="InterPro" id="IPR011199">
    <property type="entry name" value="Bacillithiol_biosynth_BshC"/>
</dbReference>
<dbReference type="InterPro" id="IPR055399">
    <property type="entry name" value="CC_BshC"/>
</dbReference>
<dbReference type="InterPro" id="IPR055398">
    <property type="entry name" value="Rossmann-like_BshC"/>
</dbReference>
<dbReference type="NCBIfam" id="TIGR03998">
    <property type="entry name" value="thiol_BshC"/>
    <property type="match status" value="1"/>
</dbReference>
<dbReference type="Pfam" id="PF24850">
    <property type="entry name" value="CC_BshC"/>
    <property type="match status" value="1"/>
</dbReference>
<dbReference type="Pfam" id="PF10079">
    <property type="entry name" value="Rossmann-like_BshC"/>
    <property type="match status" value="1"/>
</dbReference>
<dbReference type="PIRSF" id="PIRSF012535">
    <property type="entry name" value="UCP012535"/>
    <property type="match status" value="1"/>
</dbReference>